<dbReference type="EC" id="2.7.7.48" evidence="3"/>
<dbReference type="EC" id="3.6.1.-" evidence="2"/>
<dbReference type="EC" id="2.7.7.88" evidence="2"/>
<dbReference type="EC" id="2.1.1.375" evidence="2"/>
<dbReference type="EMBL" id="D10371">
    <property type="protein sequence ID" value="BAA01208.1"/>
    <property type="molecule type" value="Genomic_RNA"/>
</dbReference>
<dbReference type="GO" id="GO:0030430">
    <property type="term" value="C:host cell cytoplasm"/>
    <property type="evidence" value="ECO:0007669"/>
    <property type="project" value="UniProtKB-SubCell"/>
</dbReference>
<dbReference type="GO" id="GO:0044423">
    <property type="term" value="C:virion component"/>
    <property type="evidence" value="ECO:0007669"/>
    <property type="project" value="UniProtKB-KW"/>
</dbReference>
<dbReference type="GO" id="GO:0005524">
    <property type="term" value="F:ATP binding"/>
    <property type="evidence" value="ECO:0007669"/>
    <property type="project" value="UniProtKB-KW"/>
</dbReference>
<dbReference type="GO" id="GO:0003924">
    <property type="term" value="F:GTPase activity"/>
    <property type="evidence" value="ECO:0007669"/>
    <property type="project" value="RHEA"/>
</dbReference>
<dbReference type="GO" id="GO:0008168">
    <property type="term" value="F:methyltransferase activity"/>
    <property type="evidence" value="ECO:0007669"/>
    <property type="project" value="UniProtKB-KW"/>
</dbReference>
<dbReference type="GO" id="GO:0003968">
    <property type="term" value="F:RNA-directed RNA polymerase activity"/>
    <property type="evidence" value="ECO:0007669"/>
    <property type="project" value="UniProtKB-KW"/>
</dbReference>
<dbReference type="GO" id="GO:0006370">
    <property type="term" value="P:7-methylguanosine mRNA capping"/>
    <property type="evidence" value="ECO:0007669"/>
    <property type="project" value="UniProtKB-KW"/>
</dbReference>
<dbReference type="GO" id="GO:0032259">
    <property type="term" value="P:methylation"/>
    <property type="evidence" value="ECO:0007669"/>
    <property type="project" value="UniProtKB-KW"/>
</dbReference>
<proteinExistence type="inferred from homology"/>
<evidence type="ECO:0000250" key="1"/>
<evidence type="ECO:0000250" key="2">
    <source>
        <dbReference type="UniProtKB" id="P03523"/>
    </source>
</evidence>
<evidence type="ECO:0000250" key="3">
    <source>
        <dbReference type="UniProtKB" id="P28887"/>
    </source>
</evidence>
<evidence type="ECO:0000305" key="4"/>
<keyword id="KW-0067">ATP-binding</keyword>
<keyword id="KW-1035">Host cytoplasm</keyword>
<keyword id="KW-0378">Hydrolase</keyword>
<keyword id="KW-0489">Methyltransferase</keyword>
<keyword id="KW-0506">mRNA capping</keyword>
<keyword id="KW-0507">mRNA processing</keyword>
<keyword id="KW-0511">Multifunctional enzyme</keyword>
<keyword id="KW-0547">Nucleotide-binding</keyword>
<keyword id="KW-0548">Nucleotidyltransferase</keyword>
<keyword id="KW-0696">RNA-directed RNA polymerase</keyword>
<keyword id="KW-0949">S-adenosyl-L-methionine</keyword>
<keyword id="KW-0808">Transferase</keyword>
<keyword id="KW-0693">Viral RNA replication</keyword>
<keyword id="KW-0946">Virion</keyword>
<organism>
    <name type="scientific">Phocine distemper virus</name>
    <name type="common">PDV</name>
    <dbReference type="NCBI Taxonomy" id="11240"/>
    <lineage>
        <taxon>Viruses</taxon>
        <taxon>Riboviria</taxon>
        <taxon>Orthornavirae</taxon>
        <taxon>Negarnaviricota</taxon>
        <taxon>Haploviricotina</taxon>
        <taxon>Monjiviricetes</taxon>
        <taxon>Mononegavirales</taxon>
        <taxon>Paramyxoviridae</taxon>
        <taxon>Orthoparamyxovirinae</taxon>
        <taxon>Morbillivirus</taxon>
        <taxon>Morbillivirus phocae</taxon>
    </lineage>
</organism>
<gene>
    <name type="primary">L</name>
</gene>
<feature type="chain" id="PRO_0000142732" description="RNA-directed RNA polymerase L">
    <location>
        <begin position="1"/>
        <end position="10" status="greater than"/>
    </location>
</feature>
<feature type="non-terminal residue">
    <location>
        <position position="10"/>
    </location>
</feature>
<name>L_PHODV</name>
<protein>
    <recommendedName>
        <fullName>RNA-directed RNA polymerase L</fullName>
        <shortName>Protein L</shortName>
    </recommendedName>
    <alternativeName>
        <fullName>Large structural protein</fullName>
    </alternativeName>
    <alternativeName>
        <fullName>Replicase</fullName>
    </alternativeName>
    <alternativeName>
        <fullName>Transcriptase</fullName>
    </alternativeName>
    <domain>
        <recommendedName>
            <fullName>RNA-directed RNA polymerase</fullName>
            <ecNumber evidence="3">2.7.7.48</ecNumber>
        </recommendedName>
    </domain>
    <domain>
        <recommendedName>
            <fullName evidence="2">GTP phosphohydrolase</fullName>
            <ecNumber evidence="2">3.6.1.-</ecNumber>
        </recommendedName>
    </domain>
    <domain>
        <recommendedName>
            <fullName evidence="4">GDP polyribonucleotidyltransferase</fullName>
            <ecNumber evidence="2">2.7.7.88</ecNumber>
        </recommendedName>
        <alternativeName>
            <fullName evidence="4">PRNTase</fullName>
        </alternativeName>
    </domain>
    <domain>
        <recommendedName>
            <fullName evidence="4">mRNA cap methyltransferase</fullName>
            <ecNumber evidence="2">2.1.1.375</ecNumber>
        </recommendedName>
        <alternativeName>
            <fullName evidence="2">mRNA (guanine-N(7)-)-methyltransferase</fullName>
            <shortName evidence="2">G-N7-MTase</shortName>
        </alternativeName>
        <alternativeName>
            <fullName evidence="2">mRNA (nucleoside-2'-O-)-methyltransferase</fullName>
            <shortName evidence="2">N1-2'-O-MTase</shortName>
        </alternativeName>
    </domain>
</protein>
<accession>P35946</accession>
<sequence>MDSVSVNQIL</sequence>
<comment type="function">
    <text evidence="1">Displays RNA-directed RNA polymerase, mRNA guanylyl transferase, mRNA (guanine-N(7)-)-methyltransferase and poly(A) synthetase activities. The viral mRNA guanylyl transferase displays a different biochemical reaction than the cellular enzyme. The template is composed of the viral RNA tightly encapsidated by the nucleoprotein (N). Functions either as transcriptase or as replicase. The transcriptase synthesizes subsequently the subgenomic RNAs, assuring their capping and polyadenylation by a stuttering mechanism. The transcriptase stutters on a specific sequence, resulting on a cotranscriptional editing of the phosphoprotein (P) mRNA. The replicase mode is dependent on intracellular N protein concentration. In this mode, the polymerase replicates the whole viral genome without recognizing the transcriptional signals (By similarity).</text>
</comment>
<comment type="catalytic activity">
    <reaction>
        <text>RNA(n) + a ribonucleoside 5'-triphosphate = RNA(n+1) + diphosphate</text>
        <dbReference type="Rhea" id="RHEA:21248"/>
        <dbReference type="Rhea" id="RHEA-COMP:14527"/>
        <dbReference type="Rhea" id="RHEA-COMP:17342"/>
        <dbReference type="ChEBI" id="CHEBI:33019"/>
        <dbReference type="ChEBI" id="CHEBI:61557"/>
        <dbReference type="ChEBI" id="CHEBI:140395"/>
        <dbReference type="EC" id="2.7.7.48"/>
    </reaction>
</comment>
<comment type="catalytic activity">
    <reaction evidence="2">
        <text>a 5'-end (5'-triphosphoguanosine)-adenylyl-adenylyl-cytidylyl-adenosine in mRNA + 2 S-adenosyl-L-methionine = a 5'-end (N(7)-methyl 5'-triphosphoguanosine)-(2'-O-methyladenylyl)-adenylyl-cytidylyl-adenosine in mRNA + 2 S-adenosyl-L-homocysteine + H(+)</text>
        <dbReference type="Rhea" id="RHEA:65376"/>
        <dbReference type="Rhea" id="RHEA-COMP:16797"/>
        <dbReference type="Rhea" id="RHEA-COMP:16798"/>
        <dbReference type="ChEBI" id="CHEBI:15378"/>
        <dbReference type="ChEBI" id="CHEBI:57856"/>
        <dbReference type="ChEBI" id="CHEBI:59789"/>
        <dbReference type="ChEBI" id="CHEBI:156483"/>
        <dbReference type="ChEBI" id="CHEBI:156484"/>
        <dbReference type="EC" id="2.1.1.375"/>
    </reaction>
</comment>
<comment type="catalytic activity">
    <reaction evidence="2">
        <text>a 5'-end (5'-triphosphoguanosine)-adenylyl-adenylyl-cytidylyl-adenosine in mRNA + S-adenosyl-L-methionine = a 5'-end (5'-triphosphoguanosine)-(2'-O-methyladenylyl)-adenylyl-cytidylyl-adenosine in mRNA + S-adenosyl-L-homocysteine + H(+)</text>
        <dbReference type="Rhea" id="RHEA:65380"/>
        <dbReference type="Rhea" id="RHEA-COMP:16797"/>
        <dbReference type="Rhea" id="RHEA-COMP:16801"/>
        <dbReference type="ChEBI" id="CHEBI:15378"/>
        <dbReference type="ChEBI" id="CHEBI:57856"/>
        <dbReference type="ChEBI" id="CHEBI:59789"/>
        <dbReference type="ChEBI" id="CHEBI:156482"/>
        <dbReference type="ChEBI" id="CHEBI:156484"/>
    </reaction>
</comment>
<comment type="catalytic activity">
    <reaction evidence="3">
        <text>GTP + H2O = GDP + phosphate + H(+)</text>
        <dbReference type="Rhea" id="RHEA:19669"/>
        <dbReference type="ChEBI" id="CHEBI:15377"/>
        <dbReference type="ChEBI" id="CHEBI:15378"/>
        <dbReference type="ChEBI" id="CHEBI:37565"/>
        <dbReference type="ChEBI" id="CHEBI:43474"/>
        <dbReference type="ChEBI" id="CHEBI:58189"/>
    </reaction>
</comment>
<comment type="catalytic activity">
    <reaction evidence="2">
        <text>a 5'-end (5'-triphosphoguanosine)-(2'-O-methyladenylyl)-adenylyl-cytidylyl-adenosine in mRNA + S-adenosyl-L-methionine = a 5'-end (N(7)-methyl 5'-triphosphoguanosine)-(2'-O-methyladenylyl)-adenylyl-cytidylyl-adenosine in mRNA + S-adenosyl-L-homocysteine</text>
        <dbReference type="Rhea" id="RHEA:65440"/>
        <dbReference type="Rhea" id="RHEA-COMP:16798"/>
        <dbReference type="Rhea" id="RHEA-COMP:16801"/>
        <dbReference type="ChEBI" id="CHEBI:57856"/>
        <dbReference type="ChEBI" id="CHEBI:59789"/>
        <dbReference type="ChEBI" id="CHEBI:156482"/>
        <dbReference type="ChEBI" id="CHEBI:156483"/>
    </reaction>
</comment>
<comment type="catalytic activity">
    <reaction evidence="2">
        <text>a 5'-end triphospho-adenylyl-adenylyl-cytidylyl-adenosine in mRNA + GDP + H(+) = a 5'-end (5'-triphosphoguanosine)-adenylyl-adenylyl-cytidylyl-adenosine in mRNA + diphosphate</text>
        <dbReference type="Rhea" id="RHEA:65436"/>
        <dbReference type="Rhea" id="RHEA-COMP:16797"/>
        <dbReference type="Rhea" id="RHEA-COMP:16799"/>
        <dbReference type="ChEBI" id="CHEBI:15378"/>
        <dbReference type="ChEBI" id="CHEBI:33019"/>
        <dbReference type="ChEBI" id="CHEBI:58189"/>
        <dbReference type="ChEBI" id="CHEBI:156484"/>
        <dbReference type="ChEBI" id="CHEBI:156503"/>
        <dbReference type="EC" id="2.7.7.88"/>
    </reaction>
</comment>
<comment type="subunit">
    <text evidence="1">Interacts with the P protein.</text>
</comment>
<comment type="subcellular location">
    <subcellularLocation>
        <location evidence="4">Virion</location>
    </subcellularLocation>
    <subcellularLocation>
        <location evidence="1">Host cytoplasm</location>
    </subcellularLocation>
</comment>
<comment type="similarity">
    <text evidence="4">Belongs to the paramyxovirus L protein family.</text>
</comment>
<reference key="1">
    <citation type="journal article" date="1992" name="J. Gen. Virol.">
        <title>Molecular characterization of phocine distemper virus: gene order and sequence of the gene encoding the attachment (H) protein.</title>
        <authorList>
            <person name="Curran M.D."/>
            <person name="O'Loan D."/>
            <person name="Kennedy S."/>
            <person name="Rima B.K."/>
        </authorList>
    </citation>
    <scope>NUCLEOTIDE SEQUENCE [GENOMIC RNA]</scope>
    <source>
        <strain>Ulster/88</strain>
    </source>
</reference>
<organismHost>
    <name type="scientific">Phocidae</name>
    <name type="common">true seals</name>
    <dbReference type="NCBI Taxonomy" id="9709"/>
</organismHost>